<dbReference type="EMBL" id="FO080523">
    <property type="protein sequence ID" value="CCD64377.1"/>
    <property type="molecule type" value="Genomic_DNA"/>
</dbReference>
<dbReference type="PIR" id="C88487">
    <property type="entry name" value="C88487"/>
</dbReference>
<dbReference type="RefSeq" id="NP_498463.1">
    <property type="nucleotide sequence ID" value="NM_066062.5"/>
</dbReference>
<dbReference type="SMR" id="Q09236"/>
<dbReference type="BioGRID" id="41156">
    <property type="interactions" value="14"/>
</dbReference>
<dbReference type="DIP" id="DIP-26714N"/>
<dbReference type="FunCoup" id="Q09236">
    <property type="interactions" value="3301"/>
</dbReference>
<dbReference type="STRING" id="6239.C13B9.3.2"/>
<dbReference type="iPTMnet" id="Q09236"/>
<dbReference type="PaxDb" id="6239-C13B9.3"/>
<dbReference type="PeptideAtlas" id="Q09236"/>
<dbReference type="EnsemblMetazoa" id="C13B9.3.1">
    <property type="protein sequence ID" value="C13B9.3.1"/>
    <property type="gene ID" value="WBGene00015734"/>
</dbReference>
<dbReference type="GeneID" id="175940"/>
<dbReference type="KEGG" id="cel:CELE_C13B9.3"/>
<dbReference type="UCSC" id="C13B9.3">
    <property type="organism name" value="c. elegans"/>
</dbReference>
<dbReference type="AGR" id="WB:WBGene00015734"/>
<dbReference type="CTD" id="175940"/>
<dbReference type="WormBase" id="C13B9.3">
    <property type="protein sequence ID" value="CE01778"/>
    <property type="gene ID" value="WBGene00015734"/>
    <property type="gene designation" value="copd-1"/>
</dbReference>
<dbReference type="eggNOG" id="KOG2635">
    <property type="taxonomic scope" value="Eukaryota"/>
</dbReference>
<dbReference type="GeneTree" id="ENSGT00390000017207"/>
<dbReference type="HOGENOM" id="CLU_019988_3_0_1"/>
<dbReference type="InParanoid" id="Q09236"/>
<dbReference type="OMA" id="VQFRTHP"/>
<dbReference type="OrthoDB" id="10266042at2759"/>
<dbReference type="PhylomeDB" id="Q09236"/>
<dbReference type="Reactome" id="R-CEL-6807878">
    <property type="pathway name" value="COPI-mediated anterograde transport"/>
</dbReference>
<dbReference type="Reactome" id="R-CEL-6811434">
    <property type="pathway name" value="COPI-dependent Golgi-to-ER retrograde traffic"/>
</dbReference>
<dbReference type="PRO" id="PR:Q09236"/>
<dbReference type="Proteomes" id="UP000001940">
    <property type="component" value="Chromosome III"/>
</dbReference>
<dbReference type="Bgee" id="WBGene00015734">
    <property type="expression patterns" value="Expressed in pharyngeal muscle cell (C elegans) and 4 other cell types or tissues"/>
</dbReference>
<dbReference type="GO" id="GO:0030126">
    <property type="term" value="C:COPI vesicle coat"/>
    <property type="evidence" value="ECO:0000318"/>
    <property type="project" value="GO_Central"/>
</dbReference>
<dbReference type="GO" id="GO:0000139">
    <property type="term" value="C:Golgi membrane"/>
    <property type="evidence" value="ECO:0007669"/>
    <property type="project" value="UniProtKB-SubCell"/>
</dbReference>
<dbReference type="GO" id="GO:0006888">
    <property type="term" value="P:endoplasmic reticulum to Golgi vesicle-mediated transport"/>
    <property type="evidence" value="ECO:0000318"/>
    <property type="project" value="GO_Central"/>
</dbReference>
<dbReference type="GO" id="GO:0051645">
    <property type="term" value="P:Golgi localization"/>
    <property type="evidence" value="ECO:0000318"/>
    <property type="project" value="GO_Central"/>
</dbReference>
<dbReference type="GO" id="GO:0015031">
    <property type="term" value="P:protein transport"/>
    <property type="evidence" value="ECO:0007669"/>
    <property type="project" value="UniProtKB-KW"/>
</dbReference>
<dbReference type="GO" id="GO:0006890">
    <property type="term" value="P:retrograde vesicle-mediated transport, Golgi to endoplasmic reticulum"/>
    <property type="evidence" value="ECO:0000318"/>
    <property type="project" value="GO_Central"/>
</dbReference>
<dbReference type="CDD" id="cd09254">
    <property type="entry name" value="AP_delta-COPI_MHD"/>
    <property type="match status" value="1"/>
</dbReference>
<dbReference type="CDD" id="cd14830">
    <property type="entry name" value="Delta_COP_N"/>
    <property type="match status" value="1"/>
</dbReference>
<dbReference type="FunFam" id="2.60.40.1170:FF:000007">
    <property type="entry name" value="Coatomer subunit delta"/>
    <property type="match status" value="1"/>
</dbReference>
<dbReference type="FunFam" id="3.30.450.60:FF:000003">
    <property type="entry name" value="Coatomer subunit delta"/>
    <property type="match status" value="1"/>
</dbReference>
<dbReference type="Gene3D" id="3.30.450.60">
    <property type="match status" value="1"/>
</dbReference>
<dbReference type="Gene3D" id="2.60.40.1170">
    <property type="entry name" value="Mu homology domain, subdomain B"/>
    <property type="match status" value="2"/>
</dbReference>
<dbReference type="InterPro" id="IPR036168">
    <property type="entry name" value="AP2_Mu_C_sf"/>
</dbReference>
<dbReference type="InterPro" id="IPR022775">
    <property type="entry name" value="AP_mu_sigma_su"/>
</dbReference>
<dbReference type="InterPro" id="IPR027059">
    <property type="entry name" value="Coatomer_dsu"/>
</dbReference>
<dbReference type="InterPro" id="IPR011012">
    <property type="entry name" value="Longin-like_dom_sf"/>
</dbReference>
<dbReference type="InterPro" id="IPR028565">
    <property type="entry name" value="MHD"/>
</dbReference>
<dbReference type="PANTHER" id="PTHR10121">
    <property type="entry name" value="COATOMER SUBUNIT DELTA"/>
    <property type="match status" value="1"/>
</dbReference>
<dbReference type="PANTHER" id="PTHR10121:SF0">
    <property type="entry name" value="COATOMER SUBUNIT DELTA"/>
    <property type="match status" value="1"/>
</dbReference>
<dbReference type="Pfam" id="PF00928">
    <property type="entry name" value="Adap_comp_sub"/>
    <property type="match status" value="1"/>
</dbReference>
<dbReference type="Pfam" id="PF01217">
    <property type="entry name" value="Clat_adaptor_s"/>
    <property type="match status" value="1"/>
</dbReference>
<dbReference type="SUPFAM" id="SSF49447">
    <property type="entry name" value="Second domain of Mu2 adaptin subunit (ap50) of ap2 adaptor"/>
    <property type="match status" value="1"/>
</dbReference>
<dbReference type="SUPFAM" id="SSF64356">
    <property type="entry name" value="SNARE-like"/>
    <property type="match status" value="1"/>
</dbReference>
<dbReference type="PROSITE" id="PS51072">
    <property type="entry name" value="MHD"/>
    <property type="match status" value="1"/>
</dbReference>
<sequence length="515" mass="56646">MVLIAACILSKTGKLLVARQFVNDMMRSRLEGLVDAFPKLIGNEKEAATRQHTFVETDSVRYVYHPLDNIYLVLVTTKNSNILEDLETLRLFVRVIPEYCRSNEEKEILAHDFDLIFAFDEVVTLGYRESVNLAQIRTFTEMDSHEERVFMQIKEAQEKAAKQAMAEKAKELKRAQKEALSRGLKPSYQSSTGISSSSTPNAAAVSEPAAPRPSAPKGPIGGGKALKLGGKTNNEDDFLDTLRQQGQSIAPVQKASLSGGVSSLAAPISTAPRVKREVVHVRTEEKINTRVSRDGGLESGEVQATVTLSIGSPEFIPISIKMNNGSAAGTQLQVHPNLDKKEWQSSSTLKIKPNGKPYPVNSDVGILKWKMALSEEEQLPISFNCWPQESSDGVQVNIEYTLQREDITLNNVRIIVPLPTATAPSVGECDGEYEYHKTKNVIVWSLAVIDSSNSSGTLEFSVPNGHCDHFFPVSVGFTSENLFVPITVQKVVKNDGSPVTYSVETTFNSENFEIV</sequence>
<evidence type="ECO:0000250" key="1"/>
<evidence type="ECO:0000255" key="2">
    <source>
        <dbReference type="PROSITE-ProRule" id="PRU00404"/>
    </source>
</evidence>
<evidence type="ECO:0000256" key="3">
    <source>
        <dbReference type="SAM" id="MobiDB-lite"/>
    </source>
</evidence>
<evidence type="ECO:0000305" key="4"/>
<evidence type="ECO:0000312" key="5">
    <source>
        <dbReference type="WormBase" id="C13B9.3"/>
    </source>
</evidence>
<keyword id="KW-0963">Cytoplasm</keyword>
<keyword id="KW-0968">Cytoplasmic vesicle</keyword>
<keyword id="KW-0931">ER-Golgi transport</keyword>
<keyword id="KW-0333">Golgi apparatus</keyword>
<keyword id="KW-0472">Membrane</keyword>
<keyword id="KW-0653">Protein transport</keyword>
<keyword id="KW-1185">Reference proteome</keyword>
<keyword id="KW-0813">Transport</keyword>
<name>COPD_CAEEL</name>
<gene>
    <name evidence="5" type="primary">copd-1</name>
    <name evidence="5" type="ORF">C13B9.3</name>
</gene>
<accession>Q09236</accession>
<reference key="1">
    <citation type="journal article" date="1998" name="Science">
        <title>Genome sequence of the nematode C. elegans: a platform for investigating biology.</title>
        <authorList>
            <consortium name="The C. elegans sequencing consortium"/>
        </authorList>
    </citation>
    <scope>NUCLEOTIDE SEQUENCE [LARGE SCALE GENOMIC DNA]</scope>
    <source>
        <strain>Bristol N2</strain>
    </source>
</reference>
<protein>
    <recommendedName>
        <fullName>Probable coatomer subunit delta</fullName>
    </recommendedName>
    <alternativeName>
        <fullName>Delta-coat protein</fullName>
        <shortName>Delta-COP</shortName>
    </alternativeName>
</protein>
<organism>
    <name type="scientific">Caenorhabditis elegans</name>
    <dbReference type="NCBI Taxonomy" id="6239"/>
    <lineage>
        <taxon>Eukaryota</taxon>
        <taxon>Metazoa</taxon>
        <taxon>Ecdysozoa</taxon>
        <taxon>Nematoda</taxon>
        <taxon>Chromadorea</taxon>
        <taxon>Rhabditida</taxon>
        <taxon>Rhabditina</taxon>
        <taxon>Rhabditomorpha</taxon>
        <taxon>Rhabditoidea</taxon>
        <taxon>Rhabditidae</taxon>
        <taxon>Peloderinae</taxon>
        <taxon>Caenorhabditis</taxon>
    </lineage>
</organism>
<comment type="function">
    <text evidence="1">The coatomer is a cytosolic protein complex that binds to dilysine motifs and reversibly associates with Golgi non-clathrin-coated vesicles, which further mediate biosynthetic protein transport from the ER, via the Golgi up to the trans Golgi network. Coatomer complex is required for budding from Golgi membranes, and is essential for the retrograde Golgi-to-ER transport of dilysine-tagged proteins (By similarity).</text>
</comment>
<comment type="subunit">
    <text evidence="1">Oligomeric complex that consists of at least the alpha, beta, beta', gamma, delta, epsilon and zeta subunits.</text>
</comment>
<comment type="subcellular location">
    <subcellularLocation>
        <location evidence="1">Cytoplasm</location>
    </subcellularLocation>
    <subcellularLocation>
        <location evidence="1">Golgi apparatus membrane</location>
        <topology evidence="1">Peripheral membrane protein</topology>
        <orientation evidence="1">Cytoplasmic side</orientation>
    </subcellularLocation>
    <subcellularLocation>
        <location evidence="1">Cytoplasmic vesicle</location>
        <location evidence="1">COPI-coated vesicle membrane</location>
        <topology evidence="1">Peripheral membrane protein</topology>
        <orientation evidence="1">Cytoplasmic side</orientation>
    </subcellularLocation>
    <text evidence="1">The coatomer is cytoplasmic or polymerized on the cytoplasmic side of the Golgi, as well as on the vesicles/buds originating from it.</text>
</comment>
<comment type="similarity">
    <text evidence="4">Belongs to the adaptor complexes medium subunit family. Delta-COP subfamily.</text>
</comment>
<proteinExistence type="inferred from homology"/>
<feature type="chain" id="PRO_0000193846" description="Probable coatomer subunit delta">
    <location>
        <begin position="1"/>
        <end position="515"/>
    </location>
</feature>
<feature type="domain" description="MHD" evidence="2">
    <location>
        <begin position="276"/>
        <end position="515"/>
    </location>
</feature>
<feature type="region of interest" description="Disordered" evidence="3">
    <location>
        <begin position="161"/>
        <end position="231"/>
    </location>
</feature>
<feature type="compositionally biased region" description="Basic and acidic residues" evidence="3">
    <location>
        <begin position="161"/>
        <end position="180"/>
    </location>
</feature>
<feature type="compositionally biased region" description="Low complexity" evidence="3">
    <location>
        <begin position="187"/>
        <end position="198"/>
    </location>
</feature>